<feature type="chain" id="PRO_0000163751" description="Phosducin">
    <location>
        <begin position="1"/>
        <end position="245"/>
    </location>
</feature>
<feature type="domain" description="Phosducin" evidence="4">
    <location>
        <begin position="1"/>
        <end position="241"/>
    </location>
</feature>
<feature type="region of interest" description="Disordered" evidence="5">
    <location>
        <begin position="1"/>
        <end position="67"/>
    </location>
</feature>
<feature type="region of interest" description="Thioredoxin fold" evidence="1">
    <location>
        <begin position="111"/>
        <end position="245"/>
    </location>
</feature>
<feature type="compositionally biased region" description="Basic and acidic residues" evidence="5">
    <location>
        <begin position="58"/>
        <end position="67"/>
    </location>
</feature>
<feature type="modified residue" description="Phosphoserine; by PKA" evidence="2">
    <location>
        <position position="73"/>
    </location>
</feature>
<organism>
    <name type="scientific">Equus caballus</name>
    <name type="common">Horse</name>
    <dbReference type="NCBI Taxonomy" id="9796"/>
    <lineage>
        <taxon>Eukaryota</taxon>
        <taxon>Metazoa</taxon>
        <taxon>Chordata</taxon>
        <taxon>Craniata</taxon>
        <taxon>Vertebrata</taxon>
        <taxon>Euteleostomi</taxon>
        <taxon>Mammalia</taxon>
        <taxon>Eutheria</taxon>
        <taxon>Laurasiatheria</taxon>
        <taxon>Perissodactyla</taxon>
        <taxon>Equidae</taxon>
        <taxon>Equus</taxon>
    </lineage>
</organism>
<dbReference type="EMBL" id="AF135443">
    <property type="protein sequence ID" value="AAD26865.1"/>
    <property type="molecule type" value="mRNA"/>
</dbReference>
<dbReference type="EMBL" id="AF155881">
    <property type="protein sequence ID" value="AAD38848.1"/>
    <property type="molecule type" value="mRNA"/>
</dbReference>
<dbReference type="EMBL" id="AF162703">
    <property type="protein sequence ID" value="AAD47064.1"/>
    <property type="molecule type" value="mRNA"/>
</dbReference>
<dbReference type="RefSeq" id="NP_001075317.1">
    <property type="nucleotide sequence ID" value="NM_001081848.1"/>
</dbReference>
<dbReference type="RefSeq" id="XP_005609800.1">
    <property type="nucleotide sequence ID" value="XM_005609743.3"/>
</dbReference>
<dbReference type="RefSeq" id="XP_023495980.1">
    <property type="nucleotide sequence ID" value="XM_023640212.2"/>
</dbReference>
<dbReference type="SMR" id="Q9XS39"/>
<dbReference type="FunCoup" id="Q9XS39">
    <property type="interactions" value="56"/>
</dbReference>
<dbReference type="STRING" id="9796.ENSECAP00000013414"/>
<dbReference type="PaxDb" id="9796-ENSECAP00000013414"/>
<dbReference type="Ensembl" id="ENSECAT00000016604.2">
    <property type="protein sequence ID" value="ENSECAP00000013414.2"/>
    <property type="gene ID" value="ENSECAG00000015729.3"/>
</dbReference>
<dbReference type="GeneID" id="100033898"/>
<dbReference type="KEGG" id="ecb:100033898"/>
<dbReference type="CTD" id="5132"/>
<dbReference type="VGNC" id="VGNC:50858">
    <property type="gene designation" value="PDC"/>
</dbReference>
<dbReference type="GeneTree" id="ENSGT00940000156236"/>
<dbReference type="HOGENOM" id="CLU_085598_1_0_1"/>
<dbReference type="InParanoid" id="Q9XS39"/>
<dbReference type="OMA" id="PKYGYLC"/>
<dbReference type="OrthoDB" id="70588at2759"/>
<dbReference type="Proteomes" id="UP000002281">
    <property type="component" value="Chromosome 5"/>
</dbReference>
<dbReference type="Bgee" id="ENSECAG00000015729">
    <property type="expression patterns" value="Expressed in retina and 2 other cell types or tissues"/>
</dbReference>
<dbReference type="GO" id="GO:0005829">
    <property type="term" value="C:cytosol"/>
    <property type="evidence" value="ECO:0007669"/>
    <property type="project" value="UniProtKB-SubCell"/>
</dbReference>
<dbReference type="GO" id="GO:0005634">
    <property type="term" value="C:nucleus"/>
    <property type="evidence" value="ECO:0007669"/>
    <property type="project" value="UniProtKB-SubCell"/>
</dbReference>
<dbReference type="GO" id="GO:0001917">
    <property type="term" value="C:photoreceptor inner segment"/>
    <property type="evidence" value="ECO:0007669"/>
    <property type="project" value="UniProtKB-SubCell"/>
</dbReference>
<dbReference type="GO" id="GO:0001750">
    <property type="term" value="C:photoreceptor outer segment"/>
    <property type="evidence" value="ECO:0000318"/>
    <property type="project" value="GO_Central"/>
</dbReference>
<dbReference type="GO" id="GO:0008277">
    <property type="term" value="P:regulation of G protein-coupled receptor signaling pathway"/>
    <property type="evidence" value="ECO:0007669"/>
    <property type="project" value="InterPro"/>
</dbReference>
<dbReference type="GO" id="GO:0007601">
    <property type="term" value="P:visual perception"/>
    <property type="evidence" value="ECO:0007669"/>
    <property type="project" value="UniProtKB-KW"/>
</dbReference>
<dbReference type="CDD" id="cd02987">
    <property type="entry name" value="Phd_like_Phd"/>
    <property type="match status" value="1"/>
</dbReference>
<dbReference type="FunFam" id="3.40.30.10:FF:000072">
    <property type="entry name" value="Phosducin like"/>
    <property type="match status" value="1"/>
</dbReference>
<dbReference type="FunFam" id="1.10.168.10:FF:000002">
    <property type="entry name" value="Phosducin, isoform CRA_a"/>
    <property type="match status" value="1"/>
</dbReference>
<dbReference type="Gene3D" id="3.40.30.10">
    <property type="entry name" value="Glutaredoxin"/>
    <property type="match status" value="1"/>
</dbReference>
<dbReference type="Gene3D" id="1.10.168.10">
    <property type="entry name" value="Phosducin, domain 2"/>
    <property type="match status" value="2"/>
</dbReference>
<dbReference type="InterPro" id="IPR001200">
    <property type="entry name" value="Phosducin"/>
</dbReference>
<dbReference type="InterPro" id="IPR051499">
    <property type="entry name" value="Phosducin-like_reg"/>
</dbReference>
<dbReference type="InterPro" id="IPR023196">
    <property type="entry name" value="Phosducin_N_dom_sf"/>
</dbReference>
<dbReference type="InterPro" id="IPR024253">
    <property type="entry name" value="Phosducin_thioredoxin-like_dom"/>
</dbReference>
<dbReference type="InterPro" id="IPR036249">
    <property type="entry name" value="Thioredoxin-like_sf"/>
</dbReference>
<dbReference type="PANTHER" id="PTHR46052:SF3">
    <property type="entry name" value="PHOSDUCIN"/>
    <property type="match status" value="1"/>
</dbReference>
<dbReference type="PANTHER" id="PTHR46052">
    <property type="entry name" value="PHOSDUCIN-LIKE PROTEIN"/>
    <property type="match status" value="1"/>
</dbReference>
<dbReference type="Pfam" id="PF02114">
    <property type="entry name" value="Phosducin"/>
    <property type="match status" value="1"/>
</dbReference>
<dbReference type="PRINTS" id="PR00677">
    <property type="entry name" value="PHOSDUCIN"/>
</dbReference>
<dbReference type="SUPFAM" id="SSF52833">
    <property type="entry name" value="Thioredoxin-like"/>
    <property type="match status" value="1"/>
</dbReference>
<evidence type="ECO:0000250" key="1"/>
<evidence type="ECO:0000250" key="2">
    <source>
        <dbReference type="UniProtKB" id="P19632"/>
    </source>
</evidence>
<evidence type="ECO:0000250" key="3">
    <source>
        <dbReference type="UniProtKB" id="P20941"/>
    </source>
</evidence>
<evidence type="ECO:0000255" key="4"/>
<evidence type="ECO:0000256" key="5">
    <source>
        <dbReference type="SAM" id="MobiDB-lite"/>
    </source>
</evidence>
<evidence type="ECO:0000305" key="6"/>
<comment type="function">
    <text evidence="1">May participate in the regulation of visual phototransduction or in the integration of photoreceptor metabolism. Inhibits the transcriptional activation activity of the cone-rod homeobox CRX (By similarity).</text>
</comment>
<comment type="subunit">
    <text evidence="1">Forms a complex with the beta and gamma subunits of the GTP-binding protein, transducin. Interacts with CRX (By similarity).</text>
</comment>
<comment type="subcellular location">
    <subcellularLocation>
        <location evidence="3">Cytoplasm</location>
        <location evidence="3">Cytosol</location>
    </subcellularLocation>
    <subcellularLocation>
        <location evidence="3">Nucleus</location>
    </subcellularLocation>
    <subcellularLocation>
        <location evidence="2">Cell projection</location>
        <location evidence="2">Cilium</location>
        <location evidence="2">Photoreceptor outer segment</location>
    </subcellularLocation>
    <subcellularLocation>
        <location evidence="2">Photoreceptor inner segment</location>
    </subcellularLocation>
</comment>
<comment type="PTM">
    <text evidence="1">Light-induced changes in cyclic nucleotide levels modulate the phosphorylation of this protein by cAMP kinase.</text>
</comment>
<comment type="similarity">
    <text evidence="6">Belongs to the phosducin family.</text>
</comment>
<protein>
    <recommendedName>
        <fullName>Phosducin</fullName>
        <shortName>PHD</shortName>
    </recommendedName>
</protein>
<reference key="1">
    <citation type="journal article" date="2001" name="Am. J. Vet. Res.">
        <title>Nucleotide and deduced amino acid sequence of equine retinal and pineal gland phosducin.</title>
        <authorList>
            <person name="Keller C."/>
            <person name="Schulz R."/>
        </authorList>
    </citation>
    <scope>NUCLEOTIDE SEQUENCE [MRNA]</scope>
    <source>
        <strain>Icelandic</strain>
        <tissue>Pineal gland</tissue>
        <tissue>Retina</tissue>
    </source>
</reference>
<sequence length="245" mass="28214">MEEARRQSLEEDFEGQATHTGPKGVINDWRKFKLESEDSDSIPPCKKEILKQMSSPQSRDDKDSKERFSRKMSIQEYELIHQDKEDENCLRKYRRQCMQDMHQKLSFGPRYGFVYELETGEQFLETIEKEQKITTIVVHIYEDGIKGCDALNSSLACLAAEYPMVKFCKIKASNTGAGDRFSSDVLPTLLVYKGGELISNFLSVAEQFAEEFFAGDVESFLNEYGLLPEREIHALEQTSMEEDVE</sequence>
<proteinExistence type="evidence at transcript level"/>
<accession>Q9XS39</accession>
<gene>
    <name type="primary">PDC</name>
</gene>
<name>PHOS_HORSE</name>
<keyword id="KW-0966">Cell projection</keyword>
<keyword id="KW-0969">Cilium</keyword>
<keyword id="KW-0963">Cytoplasm</keyword>
<keyword id="KW-0539">Nucleus</keyword>
<keyword id="KW-0597">Phosphoprotein</keyword>
<keyword id="KW-1185">Reference proteome</keyword>
<keyword id="KW-0716">Sensory transduction</keyword>
<keyword id="KW-0844">Vision</keyword>